<proteinExistence type="inferred from homology"/>
<keyword id="KW-0378">Hydrolase</keyword>
<keyword id="KW-0659">Purine metabolism</keyword>
<organism>
    <name type="scientific">Pseudomonas fluorescens (strain ATCC BAA-477 / NRRL B-23932 / Pf-5)</name>
    <dbReference type="NCBI Taxonomy" id="220664"/>
    <lineage>
        <taxon>Bacteria</taxon>
        <taxon>Pseudomonadati</taxon>
        <taxon>Pseudomonadota</taxon>
        <taxon>Gammaproteobacteria</taxon>
        <taxon>Pseudomonadales</taxon>
        <taxon>Pseudomonadaceae</taxon>
        <taxon>Pseudomonas</taxon>
    </lineage>
</organism>
<gene>
    <name evidence="1" type="primary">alc</name>
    <name type="ordered locus">PFL_4368</name>
</gene>
<name>ALLC_PSEF5</name>
<sequence length="331" mass="36830">MKTNAVAFEKFVNLADARLGTKIISVTDDWFADANRLFQPTPAVWKEGIFDDNGKWMDGWESRRKRFEGYDSAVIRLGVAGSIKGVDIDTSFFTGNFPPSASLEACFLAAGEPDENTQWTEVLPAVELQGNSHHYHEIHNHQPFSHLRFNIYPDGGVARLRVYGIPYRDWSAIGDDEQVDLAAALNGGRALACSDEHFGRMGNLLNPGRGINMGDGWETARRRTPGNDWVIIALGHAGEIEKIIVDTLHFKGNYPDSCSIQGAFVKGGTDSQIETQSLFWRELLPSQKLEMHAEHSFVEQIRALGPITHVRLNVFPDGGVSRLRLLGKVKK</sequence>
<accession>Q4K8H3</accession>
<dbReference type="EC" id="3.5.3.4" evidence="1"/>
<dbReference type="EMBL" id="CP000076">
    <property type="protein sequence ID" value="AAY93623.1"/>
    <property type="molecule type" value="Genomic_DNA"/>
</dbReference>
<dbReference type="RefSeq" id="WP_011062638.1">
    <property type="nucleotide sequence ID" value="NC_004129.6"/>
</dbReference>
<dbReference type="SMR" id="Q4K8H3"/>
<dbReference type="STRING" id="220664.PFL_4368"/>
<dbReference type="KEGG" id="pfl:PFL_4368"/>
<dbReference type="PATRIC" id="fig|220664.5.peg.4475"/>
<dbReference type="eggNOG" id="COG4266">
    <property type="taxonomic scope" value="Bacteria"/>
</dbReference>
<dbReference type="HOGENOM" id="CLU_038797_1_2_6"/>
<dbReference type="UniPathway" id="UPA00395">
    <property type="reaction ID" value="UER00654"/>
</dbReference>
<dbReference type="Proteomes" id="UP000008540">
    <property type="component" value="Chromosome"/>
</dbReference>
<dbReference type="GO" id="GO:0004037">
    <property type="term" value="F:allantoicase activity"/>
    <property type="evidence" value="ECO:0007669"/>
    <property type="project" value="UniProtKB-UniRule"/>
</dbReference>
<dbReference type="GO" id="GO:0000256">
    <property type="term" value="P:allantoin catabolic process"/>
    <property type="evidence" value="ECO:0007669"/>
    <property type="project" value="UniProtKB-UniRule"/>
</dbReference>
<dbReference type="GO" id="GO:0006144">
    <property type="term" value="P:purine nucleobase metabolic process"/>
    <property type="evidence" value="ECO:0007669"/>
    <property type="project" value="UniProtKB-KW"/>
</dbReference>
<dbReference type="FunFam" id="2.60.120.260:FF:000059">
    <property type="entry name" value="Probable allantoicase"/>
    <property type="match status" value="1"/>
</dbReference>
<dbReference type="FunFam" id="2.60.120.260:FF:000090">
    <property type="entry name" value="Probable allantoicase"/>
    <property type="match status" value="1"/>
</dbReference>
<dbReference type="Gene3D" id="2.60.120.260">
    <property type="entry name" value="Galactose-binding domain-like"/>
    <property type="match status" value="2"/>
</dbReference>
<dbReference type="HAMAP" id="MF_00813">
    <property type="entry name" value="Allantoicase"/>
    <property type="match status" value="1"/>
</dbReference>
<dbReference type="InterPro" id="IPR005164">
    <property type="entry name" value="Allantoicase"/>
</dbReference>
<dbReference type="InterPro" id="IPR015908">
    <property type="entry name" value="Allantoicase_dom"/>
</dbReference>
<dbReference type="InterPro" id="IPR008979">
    <property type="entry name" value="Galactose-bd-like_sf"/>
</dbReference>
<dbReference type="NCBIfam" id="TIGR02961">
    <property type="entry name" value="allantoicase"/>
    <property type="match status" value="1"/>
</dbReference>
<dbReference type="PANTHER" id="PTHR12045">
    <property type="entry name" value="ALLANTOICASE"/>
    <property type="match status" value="1"/>
</dbReference>
<dbReference type="PANTHER" id="PTHR12045:SF3">
    <property type="entry name" value="INACTIVE ALLANTOICASE-RELATED"/>
    <property type="match status" value="1"/>
</dbReference>
<dbReference type="Pfam" id="PF03561">
    <property type="entry name" value="Allantoicase"/>
    <property type="match status" value="2"/>
</dbReference>
<dbReference type="PIRSF" id="PIRSF016516">
    <property type="entry name" value="Allantoicase"/>
    <property type="match status" value="1"/>
</dbReference>
<dbReference type="SUPFAM" id="SSF49785">
    <property type="entry name" value="Galactose-binding domain-like"/>
    <property type="match status" value="2"/>
</dbReference>
<evidence type="ECO:0000255" key="1">
    <source>
        <dbReference type="HAMAP-Rule" id="MF_00813"/>
    </source>
</evidence>
<comment type="catalytic activity">
    <reaction evidence="1">
        <text>allantoate + H2O = (S)-ureidoglycolate + urea</text>
        <dbReference type="Rhea" id="RHEA:11016"/>
        <dbReference type="ChEBI" id="CHEBI:15377"/>
        <dbReference type="ChEBI" id="CHEBI:16199"/>
        <dbReference type="ChEBI" id="CHEBI:17536"/>
        <dbReference type="ChEBI" id="CHEBI:57296"/>
        <dbReference type="EC" id="3.5.3.4"/>
    </reaction>
</comment>
<comment type="pathway">
    <text evidence="1">Nitrogen metabolism; (S)-allantoin degradation; (S)-ureidoglycolate from allantoate (aminidohydrolase route): step 1/1.</text>
</comment>
<comment type="similarity">
    <text evidence="1">Belongs to the allantoicase family.</text>
</comment>
<feature type="chain" id="PRO_0000205924" description="Probable allantoicase">
    <location>
        <begin position="1"/>
        <end position="331"/>
    </location>
</feature>
<reference key="1">
    <citation type="journal article" date="2005" name="Nat. Biotechnol.">
        <title>Complete genome sequence of the plant commensal Pseudomonas fluorescens Pf-5.</title>
        <authorList>
            <person name="Paulsen I.T."/>
            <person name="Press C.M."/>
            <person name="Ravel J."/>
            <person name="Kobayashi D.Y."/>
            <person name="Myers G.S.A."/>
            <person name="Mavrodi D.V."/>
            <person name="DeBoy R.T."/>
            <person name="Seshadri R."/>
            <person name="Ren Q."/>
            <person name="Madupu R."/>
            <person name="Dodson R.J."/>
            <person name="Durkin A.S."/>
            <person name="Brinkac L.M."/>
            <person name="Daugherty S.C."/>
            <person name="Sullivan S.A."/>
            <person name="Rosovitz M.J."/>
            <person name="Gwinn M.L."/>
            <person name="Zhou L."/>
            <person name="Schneider D.J."/>
            <person name="Cartinhour S.W."/>
            <person name="Nelson W.C."/>
            <person name="Weidman J."/>
            <person name="Watkins K."/>
            <person name="Tran K."/>
            <person name="Khouri H."/>
            <person name="Pierson E.A."/>
            <person name="Pierson L.S. III"/>
            <person name="Thomashow L.S."/>
            <person name="Loper J.E."/>
        </authorList>
    </citation>
    <scope>NUCLEOTIDE SEQUENCE [LARGE SCALE GENOMIC DNA]</scope>
    <source>
        <strain>ATCC BAA-477 / NRRL B-23932 / Pf-5</strain>
    </source>
</reference>
<protein>
    <recommendedName>
        <fullName evidence="1">Probable allantoicase</fullName>
        <ecNumber evidence="1">3.5.3.4</ecNumber>
    </recommendedName>
    <alternativeName>
        <fullName evidence="1">Allantoate amidinohydrolase</fullName>
    </alternativeName>
</protein>